<gene>
    <name evidence="1" type="primary">E2</name>
</gene>
<protein>
    <recommendedName>
        <fullName evidence="1">Regulatory protein E2</fullName>
    </recommendedName>
</protein>
<organism>
    <name type="scientific">Human papillomavirus 12</name>
    <dbReference type="NCBI Taxonomy" id="10604"/>
    <lineage>
        <taxon>Viruses</taxon>
        <taxon>Monodnaviria</taxon>
        <taxon>Shotokuvirae</taxon>
        <taxon>Cossaviricota</taxon>
        <taxon>Papovaviricetes</taxon>
        <taxon>Zurhausenvirales</taxon>
        <taxon>Papillomaviridae</taxon>
        <taxon>Firstpapillomavirinae</taxon>
        <taxon>Betapapillomavirus</taxon>
        <taxon>Betapapillomavirus 1</taxon>
    </lineage>
</organism>
<accession>P36782</accession>
<sequence>MENLSERFNVLQDQLMNIYEAAEHTLETQIAHWTLLRREAVLLYYARQKGITRLGYQPVPTLAVSEAKAKEAIGIMLQLQSLQKSEYASENWTLVDTSAETYNNVPEHHFKKGPVPVEVIYDKEPENANVYTMWKYVYYMDPEDVWHKTTSGVNQTGIYYLHGDFKHYYVLFADGARMYSKTGQWEVKVNKETVFAPVTSSTPPGSPGQRDPDATSKTPATSSDSTTRSSDKQSQQADPRRKGYGRRPSSRTRRQETQQRRSRSRYRSQSNSRSRSQSQTRALGATSVSRSSRSPSVTQIRNRRSRSQSRGRGGRGSSTDTTTKRRRSRSSSSNTRKRSQRGERGRGERGGRGKRRDRSSSTSPTPKRSRAGSRSSRQRGVSPEQVGRSLQSVSSKHRGRLGRLLEEALDPPVIICKGGANTLKCFRNRARHKYTGLFKAFSTTWSWVAGDSTERLGRPRMLISFTSTNQRKDFDETVKYPKGVETAYGNLDSL</sequence>
<reference key="1">
    <citation type="journal article" date="1994" name="Curr. Top. Microbiol. Immunol.">
        <title>Primer-directed sequencing of human papillomavirus types.</title>
        <authorList>
            <person name="Delius H."/>
            <person name="Hofmann B."/>
        </authorList>
    </citation>
    <scope>NUCLEOTIDE SEQUENCE [GENOMIC DNA]</scope>
</reference>
<evidence type="ECO:0000255" key="1">
    <source>
        <dbReference type="HAMAP-Rule" id="MF_04001"/>
    </source>
</evidence>
<evidence type="ECO:0000256" key="2">
    <source>
        <dbReference type="SAM" id="MobiDB-lite"/>
    </source>
</evidence>
<keyword id="KW-0010">Activator</keyword>
<keyword id="KW-0235">DNA replication</keyword>
<keyword id="KW-0238">DNA-binding</keyword>
<keyword id="KW-0244">Early protein</keyword>
<keyword id="KW-1048">Host nucleus</keyword>
<keyword id="KW-1017">Isopeptide bond</keyword>
<keyword id="KW-0597">Phosphoprotein</keyword>
<keyword id="KW-0678">Repressor</keyword>
<keyword id="KW-0804">Transcription</keyword>
<keyword id="KW-0805">Transcription regulation</keyword>
<keyword id="KW-0832">Ubl conjugation</keyword>
<comment type="function">
    <text evidence="1">Plays a role in the initiation of viral DNA replication. A dimer of E2 interacts with a dimer of E1 in order to improve specificity of E1 DNA binding activity. Once the complex recognizes and binds DNA at specific sites, the E2 dimer is removed from DNA. E2 also regulates viral transcription through binding to the E2RE response element (5'-ACCNNNNNNGGT-3') present in multiple copies in the regulatory regions of the viral genome. Activates or represses transcription depending on E2RE's position with regards to proximal promoter elements including the TATA-box. Repression occurs by sterically hindering the assembly of the transcription initiation complex.</text>
</comment>
<comment type="subunit">
    <text evidence="1">Binds DNA as homodimer. Interacts with protein E1; this interaction greatly increases E1 DNA-binding activity. Interacts with protein L1; this interaction enhances E2-dependent replication and transcription activation. Interacts with protein L2; this interaction inhibits E2 transcriptional activity but not DNA replication function E2. Interacts with protein E7; this interaction inhibits E7 oncogenic activity. Interacts with host TAF1; this interaction modulates E2-dependent transcriptional regulation. Interacts with host BRD4; this interaction mediates E2 transcriptional activation function. Additionally, the interaction with host BRD4 on mitotic chromosomes mediates tethering of the viral genome. Interacts with host TOPBP1; this interaction is required for optimal viral DNA replication.</text>
</comment>
<comment type="subcellular location">
    <subcellularLocation>
        <location evidence="1">Host nucleus</location>
    </subcellularLocation>
</comment>
<comment type="PTM">
    <text evidence="1">Phosphorylated.</text>
</comment>
<comment type="PTM">
    <text evidence="1">Sumoylation plays a regulatory role in E2 transcriptional activity.</text>
</comment>
<comment type="similarity">
    <text evidence="1">Belongs to the papillomaviridae E2 protein family.</text>
</comment>
<dbReference type="EMBL" id="X74466">
    <property type="protein sequence ID" value="CAA52499.1"/>
    <property type="molecule type" value="Genomic_DNA"/>
</dbReference>
<dbReference type="PIR" id="S36541">
    <property type="entry name" value="S36541"/>
</dbReference>
<dbReference type="SMR" id="P36782"/>
<dbReference type="Proteomes" id="UP000009106">
    <property type="component" value="Genome"/>
</dbReference>
<dbReference type="GO" id="GO:0042025">
    <property type="term" value="C:host cell nucleus"/>
    <property type="evidence" value="ECO:0007669"/>
    <property type="project" value="UniProtKB-SubCell"/>
</dbReference>
<dbReference type="GO" id="GO:0003677">
    <property type="term" value="F:DNA binding"/>
    <property type="evidence" value="ECO:0007669"/>
    <property type="project" value="UniProtKB-UniRule"/>
</dbReference>
<dbReference type="GO" id="GO:0003700">
    <property type="term" value="F:DNA-binding transcription factor activity"/>
    <property type="evidence" value="ECO:0007669"/>
    <property type="project" value="UniProtKB-UniRule"/>
</dbReference>
<dbReference type="GO" id="GO:0000166">
    <property type="term" value="F:nucleotide binding"/>
    <property type="evidence" value="ECO:0007669"/>
    <property type="project" value="UniProtKB-UniRule"/>
</dbReference>
<dbReference type="GO" id="GO:0006260">
    <property type="term" value="P:DNA replication"/>
    <property type="evidence" value="ECO:0007669"/>
    <property type="project" value="UniProtKB-KW"/>
</dbReference>
<dbReference type="GO" id="GO:0006351">
    <property type="term" value="P:DNA-templated transcription"/>
    <property type="evidence" value="ECO:0007669"/>
    <property type="project" value="UniProtKB-UniRule"/>
</dbReference>
<dbReference type="GO" id="GO:0006275">
    <property type="term" value="P:regulation of DNA replication"/>
    <property type="evidence" value="ECO:0007669"/>
    <property type="project" value="UniProtKB-UniRule"/>
</dbReference>
<dbReference type="GO" id="GO:0039693">
    <property type="term" value="P:viral DNA genome replication"/>
    <property type="evidence" value="ECO:0007669"/>
    <property type="project" value="UniProtKB-UniRule"/>
</dbReference>
<dbReference type="Gene3D" id="3.30.70.330">
    <property type="match status" value="1"/>
</dbReference>
<dbReference type="Gene3D" id="1.10.287.30">
    <property type="entry name" value="E2 (early) protein, N terminal domain, subdomain 1"/>
    <property type="match status" value="1"/>
</dbReference>
<dbReference type="Gene3D" id="2.170.200.10">
    <property type="entry name" value="Papillomavirus E2 early protein domain"/>
    <property type="match status" value="1"/>
</dbReference>
<dbReference type="HAMAP" id="MF_04001">
    <property type="entry name" value="PPV_E2"/>
    <property type="match status" value="1"/>
</dbReference>
<dbReference type="InterPro" id="IPR035975">
    <property type="entry name" value="E2/EBNA1_C_sf"/>
</dbReference>
<dbReference type="InterPro" id="IPR012677">
    <property type="entry name" value="Nucleotide-bd_a/b_plait_sf"/>
</dbReference>
<dbReference type="InterPro" id="IPR000427">
    <property type="entry name" value="Papillomavirus_E2_C"/>
</dbReference>
<dbReference type="InterPro" id="IPR001866">
    <property type="entry name" value="PPV_E2_N"/>
</dbReference>
<dbReference type="InterPro" id="IPR033668">
    <property type="entry name" value="Reg_prot_E2"/>
</dbReference>
<dbReference type="InterPro" id="IPR036050">
    <property type="entry name" value="Regulatory_protein_E2_N"/>
</dbReference>
<dbReference type="InterPro" id="IPR042503">
    <property type="entry name" value="Regulatory_protein_E2_N_1"/>
</dbReference>
<dbReference type="InterPro" id="IPR042504">
    <property type="entry name" value="Regulatory_protein_E2_N_2"/>
</dbReference>
<dbReference type="Pfam" id="PF00511">
    <property type="entry name" value="PPV_E2_C"/>
    <property type="match status" value="1"/>
</dbReference>
<dbReference type="Pfam" id="PF00508">
    <property type="entry name" value="PPV_E2_N"/>
    <property type="match status" value="1"/>
</dbReference>
<dbReference type="SUPFAM" id="SSF51332">
    <property type="entry name" value="E2 regulatory, transactivation domain"/>
    <property type="match status" value="1"/>
</dbReference>
<dbReference type="SUPFAM" id="SSF54957">
    <property type="entry name" value="Viral DNA-binding domain"/>
    <property type="match status" value="1"/>
</dbReference>
<feature type="chain" id="PRO_0000133191" description="Regulatory protein E2">
    <location>
        <begin position="1"/>
        <end position="494"/>
    </location>
</feature>
<feature type="region of interest" description="Transactivation domain" evidence="1">
    <location>
        <begin position="1"/>
        <end position="201"/>
    </location>
</feature>
<feature type="region of interest" description="Disordered" evidence="2">
    <location>
        <begin position="196"/>
        <end position="397"/>
    </location>
</feature>
<feature type="region of interest" description="DNA-binding domain" evidence="1">
    <location>
        <begin position="410"/>
        <end position="494"/>
    </location>
</feature>
<feature type="compositionally biased region" description="Low complexity" evidence="2">
    <location>
        <begin position="221"/>
        <end position="236"/>
    </location>
</feature>
<feature type="compositionally biased region" description="Basic residues" evidence="2">
    <location>
        <begin position="242"/>
        <end position="252"/>
    </location>
</feature>
<feature type="compositionally biased region" description="Low complexity" evidence="2">
    <location>
        <begin position="267"/>
        <end position="297"/>
    </location>
</feature>
<feature type="compositionally biased region" description="Basic residues" evidence="2">
    <location>
        <begin position="301"/>
        <end position="313"/>
    </location>
</feature>
<feature type="compositionally biased region" description="Basic residues" evidence="2">
    <location>
        <begin position="324"/>
        <end position="339"/>
    </location>
</feature>
<feature type="compositionally biased region" description="Basic and acidic residues" evidence="2">
    <location>
        <begin position="340"/>
        <end position="351"/>
    </location>
</feature>
<feature type="compositionally biased region" description="Low complexity" evidence="2">
    <location>
        <begin position="360"/>
        <end position="382"/>
    </location>
</feature>
<feature type="cross-link" description="Glycyl lysine isopeptide (Lys-Gly) (interchain with G-Cter in SUMO)" evidence="1">
    <location>
        <position position="417"/>
    </location>
</feature>
<name>VE2_HPV12</name>
<organismHost>
    <name type="scientific">Homo sapiens</name>
    <name type="common">Human</name>
    <dbReference type="NCBI Taxonomy" id="9606"/>
</organismHost>
<proteinExistence type="inferred from homology"/>